<evidence type="ECO:0000250" key="1"/>
<evidence type="ECO:0000269" key="2">
    <source>
    </source>
</evidence>
<evidence type="ECO:0000269" key="3">
    <source>
    </source>
</evidence>
<evidence type="ECO:0000305" key="4"/>
<reference key="1">
    <citation type="journal article" date="1997" name="Nature">
        <title>The nucleotide sequence of Saccharomyces cerevisiae chromosome XVI.</title>
        <authorList>
            <person name="Bussey H."/>
            <person name="Storms R.K."/>
            <person name="Ahmed A."/>
            <person name="Albermann K."/>
            <person name="Allen E."/>
            <person name="Ansorge W."/>
            <person name="Araujo R."/>
            <person name="Aparicio A."/>
            <person name="Barrell B.G."/>
            <person name="Badcock K."/>
            <person name="Benes V."/>
            <person name="Botstein D."/>
            <person name="Bowman S."/>
            <person name="Brueckner M."/>
            <person name="Carpenter J."/>
            <person name="Cherry J.M."/>
            <person name="Chung E."/>
            <person name="Churcher C.M."/>
            <person name="Coster F."/>
            <person name="Davis K."/>
            <person name="Davis R.W."/>
            <person name="Dietrich F.S."/>
            <person name="Delius H."/>
            <person name="DiPaolo T."/>
            <person name="Dubois E."/>
            <person name="Duesterhoeft A."/>
            <person name="Duncan M."/>
            <person name="Floeth M."/>
            <person name="Fortin N."/>
            <person name="Friesen J.D."/>
            <person name="Fritz C."/>
            <person name="Goffeau A."/>
            <person name="Hall J."/>
            <person name="Hebling U."/>
            <person name="Heumann K."/>
            <person name="Hilbert H."/>
            <person name="Hillier L.W."/>
            <person name="Hunicke-Smith S."/>
            <person name="Hyman R.W."/>
            <person name="Johnston M."/>
            <person name="Kalman S."/>
            <person name="Kleine K."/>
            <person name="Komp C."/>
            <person name="Kurdi O."/>
            <person name="Lashkari D."/>
            <person name="Lew H."/>
            <person name="Lin A."/>
            <person name="Lin D."/>
            <person name="Louis E.J."/>
            <person name="Marathe R."/>
            <person name="Messenguy F."/>
            <person name="Mewes H.-W."/>
            <person name="Mirtipati S."/>
            <person name="Moestl D."/>
            <person name="Mueller-Auer S."/>
            <person name="Namath A."/>
            <person name="Nentwich U."/>
            <person name="Oefner P."/>
            <person name="Pearson D."/>
            <person name="Petel F.X."/>
            <person name="Pohl T.M."/>
            <person name="Purnelle B."/>
            <person name="Rajandream M.A."/>
            <person name="Rechmann S."/>
            <person name="Rieger M."/>
            <person name="Riles L."/>
            <person name="Roberts D."/>
            <person name="Schaefer M."/>
            <person name="Scharfe M."/>
            <person name="Scherens B."/>
            <person name="Schramm S."/>
            <person name="Schroeder M."/>
            <person name="Sdicu A.-M."/>
            <person name="Tettelin H."/>
            <person name="Urrestarazu L.A."/>
            <person name="Ushinsky S."/>
            <person name="Vierendeels F."/>
            <person name="Vissers S."/>
            <person name="Voss H."/>
            <person name="Walsh S.V."/>
            <person name="Wambutt R."/>
            <person name="Wang Y."/>
            <person name="Wedler E."/>
            <person name="Wedler H."/>
            <person name="Winnett E."/>
            <person name="Zhong W.-W."/>
            <person name="Zollner A."/>
            <person name="Vo D.H."/>
            <person name="Hani J."/>
        </authorList>
    </citation>
    <scope>NUCLEOTIDE SEQUENCE [LARGE SCALE GENOMIC DNA]</scope>
    <source>
        <strain>ATCC 204508 / S288c</strain>
    </source>
</reference>
<reference key="2">
    <citation type="journal article" date="2014" name="G3 (Bethesda)">
        <title>The reference genome sequence of Saccharomyces cerevisiae: Then and now.</title>
        <authorList>
            <person name="Engel S.R."/>
            <person name="Dietrich F.S."/>
            <person name="Fisk D.G."/>
            <person name="Binkley G."/>
            <person name="Balakrishnan R."/>
            <person name="Costanzo M.C."/>
            <person name="Dwight S.S."/>
            <person name="Hitz B.C."/>
            <person name="Karra K."/>
            <person name="Nash R.S."/>
            <person name="Weng S."/>
            <person name="Wong E.D."/>
            <person name="Lloyd P."/>
            <person name="Skrzypek M.S."/>
            <person name="Miyasato S.R."/>
            <person name="Simison M."/>
            <person name="Cherry J.M."/>
        </authorList>
    </citation>
    <scope>GENOME REANNOTATION</scope>
    <source>
        <strain>ATCC 204508 / S288c</strain>
    </source>
</reference>
<reference key="3">
    <citation type="journal article" date="2003" name="Nature">
        <title>Global analysis of protein localization in budding yeast.</title>
        <authorList>
            <person name="Huh W.-K."/>
            <person name="Falvo J.V."/>
            <person name="Gerke L.C."/>
            <person name="Carroll A.S."/>
            <person name="Howson R.W."/>
            <person name="Weissman J.S."/>
            <person name="O'Shea E.K."/>
        </authorList>
    </citation>
    <scope>SUBCELLULAR LOCATION [LARGE SCALE ANALYSIS]</scope>
</reference>
<reference key="4">
    <citation type="journal article" date="2003" name="Nature">
        <title>Global analysis of protein expression in yeast.</title>
        <authorList>
            <person name="Ghaemmaghami S."/>
            <person name="Huh W.-K."/>
            <person name="Bower K."/>
            <person name="Howson R.W."/>
            <person name="Belle A."/>
            <person name="Dephoure N."/>
            <person name="O'Shea E.K."/>
            <person name="Weissman J.S."/>
        </authorList>
    </citation>
    <scope>LEVEL OF PROTEIN EXPRESSION [LARGE SCALE ANALYSIS]</scope>
</reference>
<gene>
    <name type="ordered locus">YPR172W</name>
</gene>
<comment type="cofactor">
    <cofactor evidence="1">
        <name>FMN</name>
        <dbReference type="ChEBI" id="CHEBI:58210"/>
    </cofactor>
    <text evidence="1">Binds 1 FMN per subunit.</text>
</comment>
<comment type="interaction">
    <interactant intactId="EBI-32780">
        <id>Q06608</id>
    </interactant>
    <interactant intactId="EBI-7436">
        <id>P38066</id>
        <label>RIB1</label>
    </interactant>
    <organismsDiffer>false</organismsDiffer>
    <experiments>2</experiments>
</comment>
<comment type="subcellular location">
    <subcellularLocation>
        <location evidence="2">Cytoplasm</location>
    </subcellularLocation>
    <subcellularLocation>
        <location evidence="2">Nucleus</location>
    </subcellularLocation>
</comment>
<comment type="miscellaneous">
    <text evidence="3">Present with 358 molecules/cell in log phase SD medium.</text>
</comment>
<comment type="similarity">
    <text evidence="4">Belongs to the pyridoxamine 5'-phosphate oxidase family.</text>
</comment>
<sequence>MAWTSTLPAHLLNLIKNSKYVHVATCSKDCIPSVALMNYIYVPGEKLFGQTDNKNDYIIFVSPQDTQKFYNIKENPKVALLFHDWIIANNLSVGKESISGTPTPTSIPHEEQRQSELLNLLQELNQAELNQMSASIGGETEIVNPESEESKYYKDLILKANPDAKAFIFEKNTAVVKVRIDNARVSNNENRTMFLSKGKS</sequence>
<name>PDXH_YEAST</name>
<protein>
    <recommendedName>
        <fullName>Pyridoxamine 5'-phosphate oxidase homolog</fullName>
    </recommendedName>
    <alternativeName>
        <fullName>PNP/PMP oxidase homolog</fullName>
        <shortName>PNPOx homolog</shortName>
    </alternativeName>
</protein>
<dbReference type="EMBL" id="U25842">
    <property type="protein sequence ID" value="AAB68106.1"/>
    <property type="molecule type" value="Genomic_DNA"/>
</dbReference>
<dbReference type="EMBL" id="BK006949">
    <property type="protein sequence ID" value="DAA11589.1"/>
    <property type="molecule type" value="Genomic_DNA"/>
</dbReference>
<dbReference type="PIR" id="S59830">
    <property type="entry name" value="S59830"/>
</dbReference>
<dbReference type="RefSeq" id="NP_015498.1">
    <property type="nucleotide sequence ID" value="NM_001184269.1"/>
</dbReference>
<dbReference type="SMR" id="Q06608"/>
<dbReference type="BioGRID" id="36345">
    <property type="interactions" value="94"/>
</dbReference>
<dbReference type="DIP" id="DIP-2793N"/>
<dbReference type="FunCoup" id="Q06608">
    <property type="interactions" value="57"/>
</dbReference>
<dbReference type="IntAct" id="Q06608">
    <property type="interactions" value="3"/>
</dbReference>
<dbReference type="MINT" id="Q06608"/>
<dbReference type="STRING" id="4932.YPR172W"/>
<dbReference type="iPTMnet" id="Q06608"/>
<dbReference type="PaxDb" id="4932-YPR172W"/>
<dbReference type="PeptideAtlas" id="Q06608"/>
<dbReference type="EnsemblFungi" id="YPR172W_mRNA">
    <property type="protein sequence ID" value="YPR172W"/>
    <property type="gene ID" value="YPR172W"/>
</dbReference>
<dbReference type="GeneID" id="856302"/>
<dbReference type="KEGG" id="sce:YPR172W"/>
<dbReference type="AGR" id="SGD:S000006376"/>
<dbReference type="SGD" id="S000006376">
    <property type="gene designation" value="YPR172W"/>
</dbReference>
<dbReference type="VEuPathDB" id="FungiDB:YPR172W"/>
<dbReference type="eggNOG" id="ENOG502S00X">
    <property type="taxonomic scope" value="Eukaryota"/>
</dbReference>
<dbReference type="GeneTree" id="ENSGT00940000176627"/>
<dbReference type="HOGENOM" id="CLU_078856_1_0_1"/>
<dbReference type="InParanoid" id="Q06608"/>
<dbReference type="OMA" id="HPTIIMT"/>
<dbReference type="OrthoDB" id="5300823at2759"/>
<dbReference type="BioCyc" id="YEAST:G3O-34299-MONOMER"/>
<dbReference type="BioGRID-ORCS" id="856302">
    <property type="hits" value="1 hit in 10 CRISPR screens"/>
</dbReference>
<dbReference type="PRO" id="PR:Q06608"/>
<dbReference type="Proteomes" id="UP000002311">
    <property type="component" value="Chromosome XVI"/>
</dbReference>
<dbReference type="RNAct" id="Q06608">
    <property type="molecule type" value="protein"/>
</dbReference>
<dbReference type="GO" id="GO:0005737">
    <property type="term" value="C:cytoplasm"/>
    <property type="evidence" value="ECO:0007005"/>
    <property type="project" value="SGD"/>
</dbReference>
<dbReference type="GO" id="GO:0005634">
    <property type="term" value="C:nucleus"/>
    <property type="evidence" value="ECO:0007005"/>
    <property type="project" value="SGD"/>
</dbReference>
<dbReference type="Gene3D" id="2.30.110.10">
    <property type="entry name" value="Electron Transport, Fmn-binding Protein, Chain A"/>
    <property type="match status" value="1"/>
</dbReference>
<dbReference type="InterPro" id="IPR052841">
    <property type="entry name" value="PMP_oxidase-like"/>
</dbReference>
<dbReference type="InterPro" id="IPR011576">
    <property type="entry name" value="Pyridox_Oxase_N"/>
</dbReference>
<dbReference type="InterPro" id="IPR012349">
    <property type="entry name" value="Split_barrel_FMN-bd"/>
</dbReference>
<dbReference type="PANTHER" id="PTHR28040">
    <property type="entry name" value="PYRIDOXAMINE 5'-PHOSPHATE OXIDASE YLR456W HOMOLOG-RELATED"/>
    <property type="match status" value="1"/>
</dbReference>
<dbReference type="PANTHER" id="PTHR28040:SF1">
    <property type="entry name" value="PYRIDOXAMINE 5'-PHOSPHATE OXIDASE YLR456W HOMOLOG-RELATED"/>
    <property type="match status" value="1"/>
</dbReference>
<dbReference type="Pfam" id="PF01243">
    <property type="entry name" value="PNPOx_N"/>
    <property type="match status" value="1"/>
</dbReference>
<dbReference type="SUPFAM" id="SSF50475">
    <property type="entry name" value="FMN-binding split barrel"/>
    <property type="match status" value="1"/>
</dbReference>
<feature type="chain" id="PRO_0000257818" description="Pyridoxamine 5'-phosphate oxidase homolog">
    <location>
        <begin position="1"/>
        <end position="200"/>
    </location>
</feature>
<feature type="binding site" evidence="1">
    <location>
        <position position="60"/>
    </location>
    <ligand>
        <name>FMN</name>
        <dbReference type="ChEBI" id="CHEBI:58210"/>
    </ligand>
</feature>
<feature type="binding site" evidence="1">
    <location>
        <position position="68"/>
    </location>
    <ligand>
        <name>FMN</name>
        <dbReference type="ChEBI" id="CHEBI:58210"/>
    </ligand>
</feature>
<feature type="binding site" evidence="1">
    <location>
        <position position="125"/>
    </location>
    <ligand>
        <name>FMN</name>
        <dbReference type="ChEBI" id="CHEBI:58210"/>
    </ligand>
</feature>
<keyword id="KW-0963">Cytoplasm</keyword>
<keyword id="KW-0285">Flavoprotein</keyword>
<keyword id="KW-0288">FMN</keyword>
<keyword id="KW-0539">Nucleus</keyword>
<keyword id="KW-1185">Reference proteome</keyword>
<accession>Q06608</accession>
<accession>D6W4H3</accession>
<organism>
    <name type="scientific">Saccharomyces cerevisiae (strain ATCC 204508 / S288c)</name>
    <name type="common">Baker's yeast</name>
    <dbReference type="NCBI Taxonomy" id="559292"/>
    <lineage>
        <taxon>Eukaryota</taxon>
        <taxon>Fungi</taxon>
        <taxon>Dikarya</taxon>
        <taxon>Ascomycota</taxon>
        <taxon>Saccharomycotina</taxon>
        <taxon>Saccharomycetes</taxon>
        <taxon>Saccharomycetales</taxon>
        <taxon>Saccharomycetaceae</taxon>
        <taxon>Saccharomyces</taxon>
    </lineage>
</organism>
<proteinExistence type="evidence at protein level"/>